<reference key="1">
    <citation type="journal article" date="2005" name="J. Bacteriol.">
        <title>Whole-genome sequencing of Staphylococcus haemolyticus uncovers the extreme plasticity of its genome and the evolution of human-colonizing staphylococcal species.</title>
        <authorList>
            <person name="Takeuchi F."/>
            <person name="Watanabe S."/>
            <person name="Baba T."/>
            <person name="Yuzawa H."/>
            <person name="Ito T."/>
            <person name="Morimoto Y."/>
            <person name="Kuroda M."/>
            <person name="Cui L."/>
            <person name="Takahashi M."/>
            <person name="Ankai A."/>
            <person name="Baba S."/>
            <person name="Fukui S."/>
            <person name="Lee J.C."/>
            <person name="Hiramatsu K."/>
        </authorList>
    </citation>
    <scope>NUCLEOTIDE SEQUENCE [LARGE SCALE GENOMIC DNA]</scope>
    <source>
        <strain>JCSC1435</strain>
    </source>
</reference>
<feature type="chain" id="PRO_0000289962" description="Coenzyme A disulfide reductase">
    <location>
        <begin position="1"/>
        <end position="440"/>
    </location>
</feature>
<feature type="active site" description="Nucleophile" evidence="1">
    <location>
        <position position="43"/>
    </location>
</feature>
<feature type="active site" description="Redox-active" evidence="1">
    <location>
        <position position="43"/>
    </location>
</feature>
<feature type="binding site" evidence="1">
    <location>
        <begin position="8"/>
        <end position="33"/>
    </location>
    <ligand>
        <name>FAD</name>
        <dbReference type="ChEBI" id="CHEBI:57692"/>
    </ligand>
</feature>
<feature type="binding site" evidence="1">
    <location>
        <position position="15"/>
    </location>
    <ligand>
        <name>substrate</name>
    </ligand>
</feature>
<feature type="binding site" evidence="1">
    <location>
        <position position="19"/>
    </location>
    <ligand>
        <name>substrate</name>
    </ligand>
</feature>
<feature type="binding site" evidence="1">
    <location>
        <position position="22"/>
    </location>
    <ligand>
        <name>substrate</name>
    </ligand>
</feature>
<feature type="binding site" evidence="1">
    <location>
        <position position="39"/>
    </location>
    <ligand>
        <name>substrate</name>
    </ligand>
</feature>
<feature type="binding site" evidence="1">
    <location>
        <position position="42"/>
    </location>
    <ligand>
        <name>substrate</name>
    </ligand>
</feature>
<feature type="binding site" evidence="1">
    <location>
        <position position="71"/>
    </location>
    <ligand>
        <name>substrate</name>
    </ligand>
</feature>
<feature type="binding site" evidence="1">
    <location>
        <begin position="151"/>
        <end position="166"/>
    </location>
    <ligand>
        <name>NADP(+)</name>
        <dbReference type="ChEBI" id="CHEBI:58349"/>
    </ligand>
</feature>
<feature type="binding site" evidence="1">
    <location>
        <begin position="267"/>
        <end position="277"/>
    </location>
    <ligand>
        <name>FAD</name>
        <dbReference type="ChEBI" id="CHEBI:57692"/>
    </ligand>
</feature>
<feature type="binding site" evidence="1">
    <location>
        <position position="299"/>
    </location>
    <ligand>
        <name>substrate</name>
    </ligand>
</feature>
<feature type="binding site" evidence="1">
    <location>
        <position position="419"/>
    </location>
    <ligand>
        <name>FAD</name>
        <dbReference type="ChEBI" id="CHEBI:57692"/>
    </ligand>
</feature>
<feature type="binding site" evidence="1">
    <location>
        <position position="427"/>
    </location>
    <ligand>
        <name>substrate</name>
    </ligand>
</feature>
<organism>
    <name type="scientific">Staphylococcus haemolyticus (strain JCSC1435)</name>
    <dbReference type="NCBI Taxonomy" id="279808"/>
    <lineage>
        <taxon>Bacteria</taxon>
        <taxon>Bacillati</taxon>
        <taxon>Bacillota</taxon>
        <taxon>Bacilli</taxon>
        <taxon>Bacillales</taxon>
        <taxon>Staphylococcaceae</taxon>
        <taxon>Staphylococcus</taxon>
    </lineage>
</organism>
<comment type="function">
    <text evidence="1">Catalyzes specifically the NADPH-dependent reduction of coenzyme A disulfide.</text>
</comment>
<comment type="catalytic activity">
    <reaction evidence="1">
        <text>NADP(+) + 2 CoA = CoA-disulfide + NADPH + H(+)</text>
        <dbReference type="Rhea" id="RHEA:14705"/>
        <dbReference type="ChEBI" id="CHEBI:15378"/>
        <dbReference type="ChEBI" id="CHEBI:57287"/>
        <dbReference type="ChEBI" id="CHEBI:57783"/>
        <dbReference type="ChEBI" id="CHEBI:58349"/>
        <dbReference type="ChEBI" id="CHEBI:62209"/>
        <dbReference type="EC" id="1.8.1.14"/>
    </reaction>
</comment>
<comment type="cofactor">
    <cofactor evidence="1">
        <name>FAD</name>
        <dbReference type="ChEBI" id="CHEBI:57692"/>
    </cofactor>
    <text evidence="1">Binds 1 FAD per subunit.</text>
</comment>
<comment type="subunit">
    <text evidence="1">Homodimer.</text>
</comment>
<comment type="domain">
    <text evidence="1">Contains 2 FAD binding domains and a single NADPH binding domain.</text>
</comment>
<comment type="miscellaneous">
    <text evidence="1">Reduction of disulfides occurs by a thiol-disulfide exchange reaction, but involves only a single catalytic cysteine residue that forms a stable mixed disulfide with CoA during catalysis.</text>
</comment>
<comment type="similarity">
    <text evidence="1">Belongs to the class-III pyridine nucleotide-disulfide oxidoreductase family.</text>
</comment>
<gene>
    <name evidence="1" type="primary">cdr</name>
    <name type="ordered locus">SH1979</name>
</gene>
<name>CDR_STAHJ</name>
<evidence type="ECO:0000255" key="1">
    <source>
        <dbReference type="HAMAP-Rule" id="MF_01608"/>
    </source>
</evidence>
<sequence>MRKIIVVGAVAGGATCASQIRRLDKDSEITIFEKDRDMSFANCGLPYFIGNIVNERKDVLPITPDVFKEKKDITVKTYHEVIAINDKDQTVTVVNRQTNEKFEASYDKLILSPGAGANSLGFDSDYIFTLRNMEDTDAIDQFIDQHQAKKALVVGAGYISLEVLENLYARGLDVTLIHRSEKVNKLMDQDMNQVIFDELDSRHIPYRLNEEIVSVKDHLVTFKSGIQEDFDIIIEGVGTHPHSKFIESSNVALDDKGFVKVNDKFETNIPNIYALGDVITSTYRHVNLPAQVPLAWGAHRGASVIAEQLAGNKNIIFKGFLGTNIVKFFDYTLASVGIKVEELTHFDYQMVELNSGTHAGYYPGNTNVHLRVYFDTNNRHLLRAAAVGKTGVDKRIDVLSMAMMSELTIDELTEFEVAYAPPYSHPKDLVNMIGYKARDL</sequence>
<proteinExistence type="inferred from homology"/>
<accession>Q4L4Y7</accession>
<dbReference type="EC" id="1.8.1.14" evidence="1"/>
<dbReference type="EMBL" id="AP006716">
    <property type="protein sequence ID" value="BAE05288.1"/>
    <property type="molecule type" value="Genomic_DNA"/>
</dbReference>
<dbReference type="RefSeq" id="WP_011276246.1">
    <property type="nucleotide sequence ID" value="NC_007168.1"/>
</dbReference>
<dbReference type="SMR" id="Q4L4Y7"/>
<dbReference type="GeneID" id="93781340"/>
<dbReference type="KEGG" id="sha:SH1979"/>
<dbReference type="eggNOG" id="COG0446">
    <property type="taxonomic scope" value="Bacteria"/>
</dbReference>
<dbReference type="HOGENOM" id="CLU_003291_1_3_9"/>
<dbReference type="OrthoDB" id="9802028at2"/>
<dbReference type="Proteomes" id="UP000000543">
    <property type="component" value="Chromosome"/>
</dbReference>
<dbReference type="GO" id="GO:0050451">
    <property type="term" value="F:CoA-disulfide reductase (NADPH) activity"/>
    <property type="evidence" value="ECO:0007669"/>
    <property type="project" value="UniProtKB-UniRule"/>
</dbReference>
<dbReference type="GO" id="GO:0050660">
    <property type="term" value="F:flavin adenine dinucleotide binding"/>
    <property type="evidence" value="ECO:0007669"/>
    <property type="project" value="UniProtKB-UniRule"/>
</dbReference>
<dbReference type="GO" id="GO:0050661">
    <property type="term" value="F:NADP binding"/>
    <property type="evidence" value="ECO:0007669"/>
    <property type="project" value="UniProtKB-UniRule"/>
</dbReference>
<dbReference type="GO" id="GO:0003756">
    <property type="term" value="F:protein disulfide isomerase activity"/>
    <property type="evidence" value="ECO:0007669"/>
    <property type="project" value="UniProtKB-UniRule"/>
</dbReference>
<dbReference type="Gene3D" id="3.50.50.60">
    <property type="entry name" value="FAD/NAD(P)-binding domain"/>
    <property type="match status" value="3"/>
</dbReference>
<dbReference type="HAMAP" id="MF_01608">
    <property type="entry name" value="CoA_diS_reduct"/>
    <property type="match status" value="1"/>
</dbReference>
<dbReference type="InterPro" id="IPR017758">
    <property type="entry name" value="CoA_disulphide_reductase"/>
</dbReference>
<dbReference type="InterPro" id="IPR023536">
    <property type="entry name" value="CoA_disulphide_reductase_staph"/>
</dbReference>
<dbReference type="InterPro" id="IPR050260">
    <property type="entry name" value="FAD-bd_OxRdtase"/>
</dbReference>
<dbReference type="InterPro" id="IPR036188">
    <property type="entry name" value="FAD/NAD-bd_sf"/>
</dbReference>
<dbReference type="InterPro" id="IPR023753">
    <property type="entry name" value="FAD/NAD-binding_dom"/>
</dbReference>
<dbReference type="InterPro" id="IPR016156">
    <property type="entry name" value="FAD/NAD-linked_Rdtase_dimer_sf"/>
</dbReference>
<dbReference type="InterPro" id="IPR004099">
    <property type="entry name" value="Pyr_nucl-diS_OxRdtase_dimer"/>
</dbReference>
<dbReference type="NCBIfam" id="TIGR03385">
    <property type="entry name" value="CoA_CoA_reduc"/>
    <property type="match status" value="1"/>
</dbReference>
<dbReference type="NCBIfam" id="NF010037">
    <property type="entry name" value="PRK13512.1"/>
    <property type="match status" value="1"/>
</dbReference>
<dbReference type="PANTHER" id="PTHR43429:SF1">
    <property type="entry name" value="NAD(P)H SULFUR OXIDOREDUCTASE (COA-DEPENDENT)"/>
    <property type="match status" value="1"/>
</dbReference>
<dbReference type="PANTHER" id="PTHR43429">
    <property type="entry name" value="PYRIDINE NUCLEOTIDE-DISULFIDE OXIDOREDUCTASE DOMAIN-CONTAINING"/>
    <property type="match status" value="1"/>
</dbReference>
<dbReference type="Pfam" id="PF07992">
    <property type="entry name" value="Pyr_redox_2"/>
    <property type="match status" value="1"/>
</dbReference>
<dbReference type="Pfam" id="PF02852">
    <property type="entry name" value="Pyr_redox_dim"/>
    <property type="match status" value="1"/>
</dbReference>
<dbReference type="PRINTS" id="PR00368">
    <property type="entry name" value="FADPNR"/>
</dbReference>
<dbReference type="PRINTS" id="PR00411">
    <property type="entry name" value="PNDRDTASEI"/>
</dbReference>
<dbReference type="SUPFAM" id="SSF51905">
    <property type="entry name" value="FAD/NAD(P)-binding domain"/>
    <property type="match status" value="1"/>
</dbReference>
<dbReference type="SUPFAM" id="SSF55424">
    <property type="entry name" value="FAD/NAD-linked reductases, dimerisation (C-terminal) domain"/>
    <property type="match status" value="1"/>
</dbReference>
<keyword id="KW-0274">FAD</keyword>
<keyword id="KW-0285">Flavoprotein</keyword>
<keyword id="KW-0521">NADP</keyword>
<keyword id="KW-0560">Oxidoreductase</keyword>
<keyword id="KW-0676">Redox-active center</keyword>
<protein>
    <recommendedName>
        <fullName evidence="1">Coenzyme A disulfide reductase</fullName>
        <shortName evidence="1">CoA-disulfide reductase</shortName>
        <shortName evidence="1">CoADR</shortName>
        <ecNumber evidence="1">1.8.1.14</ecNumber>
    </recommendedName>
</protein>